<feature type="chain" id="PRO_0000422113" description="Diacylglycerol kinase 5">
    <location>
        <begin position="1"/>
        <end position="509"/>
    </location>
</feature>
<feature type="domain" description="DAGKc" evidence="2">
    <location>
        <begin position="36"/>
        <end position="187"/>
    </location>
</feature>
<feature type="region of interest" description="Disordered" evidence="3">
    <location>
        <begin position="439"/>
        <end position="509"/>
    </location>
</feature>
<feature type="compositionally biased region" description="Basic and acidic residues" evidence="3">
    <location>
        <begin position="439"/>
        <end position="452"/>
    </location>
</feature>
<feature type="compositionally biased region" description="Acidic residues" evidence="3">
    <location>
        <begin position="453"/>
        <end position="467"/>
    </location>
</feature>
<feature type="compositionally biased region" description="Basic and acidic residues" evidence="3">
    <location>
        <begin position="468"/>
        <end position="489"/>
    </location>
</feature>
<feature type="compositionally biased region" description="Basic residues" evidence="3">
    <location>
        <begin position="490"/>
        <end position="500"/>
    </location>
</feature>
<feature type="splice variant" id="VSP_046410" description="In isoform 2." evidence="4 5">
    <original>GEHSNKK</original>
    <variation>VDISQLS</variation>
    <location>
        <begin position="485"/>
        <end position="491"/>
    </location>
</feature>
<feature type="splice variant" id="VSP_046411" description="In isoform 2." evidence="4 5">
    <location>
        <begin position="492"/>
        <end position="509"/>
    </location>
</feature>
<feature type="sequence conflict" description="In Ref. 5; AAM62810." evidence="6" ref="5">
    <original>E</original>
    <variation>Q</variation>
    <location>
        <position position="31"/>
    </location>
</feature>
<feature type="sequence conflict" description="In Ref. 5; AAM62810." evidence="6" ref="5">
    <original>F</original>
    <variation>S</variation>
    <location>
        <position position="97"/>
    </location>
</feature>
<feature type="sequence conflict" description="In Ref. 5; AAM62810." evidence="6" ref="5">
    <original>R</original>
    <variation>G</variation>
    <location>
        <position position="102"/>
    </location>
</feature>
<evidence type="ECO:0000250" key="1"/>
<evidence type="ECO:0000255" key="2">
    <source>
        <dbReference type="PROSITE-ProRule" id="PRU00783"/>
    </source>
</evidence>
<evidence type="ECO:0000256" key="3">
    <source>
        <dbReference type="SAM" id="MobiDB-lite"/>
    </source>
</evidence>
<evidence type="ECO:0000303" key="4">
    <source>
    </source>
</evidence>
<evidence type="ECO:0000303" key="5">
    <source ref="5"/>
</evidence>
<evidence type="ECO:0000305" key="6"/>
<comment type="function">
    <text evidence="1">Phosphorylates the second messenger diacylglycerol (DAG) to generate phosphatidic acid (PA), another important signaling molecule. PA is required for plant development and responses to abiotic stress and pathogen attack. May be involved in the accumulation of PA during cold stress (By similarity).</text>
</comment>
<comment type="catalytic activity">
    <reaction>
        <text>a 1,2-diacyl-sn-glycerol + ATP = a 1,2-diacyl-sn-glycero-3-phosphate + ADP + H(+)</text>
        <dbReference type="Rhea" id="RHEA:10272"/>
        <dbReference type="ChEBI" id="CHEBI:15378"/>
        <dbReference type="ChEBI" id="CHEBI:17815"/>
        <dbReference type="ChEBI" id="CHEBI:30616"/>
        <dbReference type="ChEBI" id="CHEBI:58608"/>
        <dbReference type="ChEBI" id="CHEBI:456216"/>
        <dbReference type="EC" id="2.7.1.107"/>
    </reaction>
</comment>
<comment type="subunit">
    <text evidence="1">Monomer.</text>
</comment>
<comment type="alternative products">
    <event type="alternative splicing"/>
    <isoform>
        <id>Q9C5E5-1</id>
        <name>1</name>
        <sequence type="displayed"/>
    </isoform>
    <isoform>
        <id>Q9C5E5-2</id>
        <name>2</name>
        <sequence type="described" ref="VSP_046410 VSP_046411"/>
    </isoform>
</comment>
<comment type="similarity">
    <text evidence="6">Belongs to the eukaryotic diacylglycerol kinase family.</text>
</comment>
<sequence>MEKYNSLSDFLKEFYIPTYVLSAETEEEEEEESRPTPASPVLVFINSKSGGQLGGELILTYRSLLNHNQVFDLDQETPDKVLRRIYLNLERLKDDDFARQIREKLKIIVAGGDGTAGWLLGVVCDLKLSHPPPIATVPLGTGNNLPFAFGWGKKNPGTDRTAVESFLEQVLKAKVMKIDNWHILMRMKTPKEGGSCDPVAPLELPHSLHAFHRVSPTDELNKEGCHTFRGGFWNYFSLGMDAQISYAFHSERKLHPEKFKNQLVNQSTYVKLGCTQGWFCASLFHPASRNIAQLAKVKIATRNGQWQDLHIPHSIRSIVCLNLPSFSGGLNPWGTPNPRKQRDRGLTPPFVDDGLIEVVGFRNAWHGLVLLAPNGHGTRLAQANRIRFEFHKGATDHTFMRMDGEPWKQPLPLDDETVMVEISHLGQVNMLATHDCRSRSVFDPSTPRHQDGAEDYDDNEDDSVAEGEEFRKFGAADTFKIPDEGEHSNKKGRASRRRNSNVHGWSHVL</sequence>
<gene>
    <name type="primary">DGK5</name>
    <name type="ordered locus">At2g20900</name>
    <name type="ORF">F5H14.13</name>
</gene>
<proteinExistence type="evidence at transcript level"/>
<dbReference type="EC" id="2.7.1.107"/>
<dbReference type="EMBL" id="AC006234">
    <property type="protein sequence ID" value="AAD20931.2"/>
    <property type="molecule type" value="Genomic_DNA"/>
</dbReference>
<dbReference type="EMBL" id="CP002685">
    <property type="protein sequence ID" value="AEC07093.1"/>
    <property type="molecule type" value="Genomic_DNA"/>
</dbReference>
<dbReference type="EMBL" id="CP002685">
    <property type="protein sequence ID" value="AEC07094.1"/>
    <property type="molecule type" value="Genomic_DNA"/>
</dbReference>
<dbReference type="EMBL" id="CP002685">
    <property type="protein sequence ID" value="AEC07095.1"/>
    <property type="molecule type" value="Genomic_DNA"/>
</dbReference>
<dbReference type="EMBL" id="CP002685">
    <property type="protein sequence ID" value="AEC07096.1"/>
    <property type="molecule type" value="Genomic_DNA"/>
</dbReference>
<dbReference type="EMBL" id="AF360300">
    <property type="protein sequence ID" value="AAK26010.1"/>
    <property type="molecule type" value="mRNA"/>
</dbReference>
<dbReference type="EMBL" id="BT000983">
    <property type="protein sequence ID" value="AAN41383.1"/>
    <property type="molecule type" value="mRNA"/>
</dbReference>
<dbReference type="EMBL" id="AK316877">
    <property type="protein sequence ID" value="BAH19585.1"/>
    <property type="molecule type" value="mRNA"/>
</dbReference>
<dbReference type="EMBL" id="AK317470">
    <property type="protein sequence ID" value="BAH20135.1"/>
    <property type="molecule type" value="mRNA"/>
</dbReference>
<dbReference type="EMBL" id="AY085589">
    <property type="protein sequence ID" value="AAM62810.1"/>
    <property type="molecule type" value="mRNA"/>
</dbReference>
<dbReference type="PIR" id="G84594">
    <property type="entry name" value="G84594"/>
</dbReference>
<dbReference type="RefSeq" id="NP_001031381.1">
    <molecule id="Q9C5E5-1"/>
    <property type="nucleotide sequence ID" value="NM_001036304.1"/>
</dbReference>
<dbReference type="RefSeq" id="NP_565492.1">
    <molecule id="Q9C5E5-2"/>
    <property type="nucleotide sequence ID" value="NM_127660.4"/>
</dbReference>
<dbReference type="RefSeq" id="NP_850007.1">
    <molecule id="Q9C5E5-1"/>
    <property type="nucleotide sequence ID" value="NM_179676.3"/>
</dbReference>
<dbReference type="RefSeq" id="NP_973498.1">
    <molecule id="Q9C5E5-2"/>
    <property type="nucleotide sequence ID" value="NM_201769.3"/>
</dbReference>
<dbReference type="BioGRID" id="1977">
    <property type="interactions" value="1"/>
</dbReference>
<dbReference type="FunCoup" id="Q9C5E5">
    <property type="interactions" value="362"/>
</dbReference>
<dbReference type="IntAct" id="Q9C5E5">
    <property type="interactions" value="1"/>
</dbReference>
<dbReference type="STRING" id="3702.Q9C5E5"/>
<dbReference type="GlyGen" id="Q9C5E5">
    <property type="glycosylation" value="1 site"/>
</dbReference>
<dbReference type="iPTMnet" id="Q9C5E5"/>
<dbReference type="PaxDb" id="3702-AT2G20900.1"/>
<dbReference type="ProteomicsDB" id="224215">
    <molecule id="Q9C5E5-1"/>
</dbReference>
<dbReference type="DNASU" id="816624"/>
<dbReference type="EnsemblPlants" id="AT2G20900.1">
    <molecule id="Q9C5E5-1"/>
    <property type="protein sequence ID" value="AT2G20900.1"/>
    <property type="gene ID" value="AT2G20900"/>
</dbReference>
<dbReference type="EnsemblPlants" id="AT2G20900.2">
    <molecule id="Q9C5E5-2"/>
    <property type="protein sequence ID" value="AT2G20900.2"/>
    <property type="gene ID" value="AT2G20900"/>
</dbReference>
<dbReference type="EnsemblPlants" id="AT2G20900.3">
    <molecule id="Q9C5E5-2"/>
    <property type="protein sequence ID" value="AT2G20900.3"/>
    <property type="gene ID" value="AT2G20900"/>
</dbReference>
<dbReference type="EnsemblPlants" id="AT2G20900.4">
    <molecule id="Q9C5E5-1"/>
    <property type="protein sequence ID" value="AT2G20900.4"/>
    <property type="gene ID" value="AT2G20900"/>
</dbReference>
<dbReference type="GeneID" id="816624"/>
<dbReference type="Gramene" id="AT2G20900.1">
    <molecule id="Q9C5E5-1"/>
    <property type="protein sequence ID" value="AT2G20900.1"/>
    <property type="gene ID" value="AT2G20900"/>
</dbReference>
<dbReference type="Gramene" id="AT2G20900.2">
    <molecule id="Q9C5E5-2"/>
    <property type="protein sequence ID" value="AT2G20900.2"/>
    <property type="gene ID" value="AT2G20900"/>
</dbReference>
<dbReference type="Gramene" id="AT2G20900.3">
    <molecule id="Q9C5E5-2"/>
    <property type="protein sequence ID" value="AT2G20900.3"/>
    <property type="gene ID" value="AT2G20900"/>
</dbReference>
<dbReference type="Gramene" id="AT2G20900.4">
    <molecule id="Q9C5E5-1"/>
    <property type="protein sequence ID" value="AT2G20900.4"/>
    <property type="gene ID" value="AT2G20900"/>
</dbReference>
<dbReference type="KEGG" id="ath:AT2G20900"/>
<dbReference type="Araport" id="AT2G20900"/>
<dbReference type="TAIR" id="AT2G20900">
    <property type="gene designation" value="DGK5"/>
</dbReference>
<dbReference type="eggNOG" id="KOG1169">
    <property type="taxonomic scope" value="Eukaryota"/>
</dbReference>
<dbReference type="InParanoid" id="Q9C5E5"/>
<dbReference type="OMA" id="IEKHDYW"/>
<dbReference type="PhylomeDB" id="Q9C5E5"/>
<dbReference type="BioCyc" id="ARA:AT2G20900-MONOMER"/>
<dbReference type="PRO" id="PR:Q9C5E5"/>
<dbReference type="Proteomes" id="UP000006548">
    <property type="component" value="Chromosome 2"/>
</dbReference>
<dbReference type="ExpressionAtlas" id="Q9C5E5">
    <property type="expression patterns" value="baseline and differential"/>
</dbReference>
<dbReference type="GO" id="GO:0005524">
    <property type="term" value="F:ATP binding"/>
    <property type="evidence" value="ECO:0007669"/>
    <property type="project" value="UniProtKB-KW"/>
</dbReference>
<dbReference type="GO" id="GO:0004143">
    <property type="term" value="F:ATP-dependent diacylglycerol kinase activity"/>
    <property type="evidence" value="ECO:0007669"/>
    <property type="project" value="UniProtKB-EC"/>
</dbReference>
<dbReference type="GO" id="GO:0006952">
    <property type="term" value="P:defense response"/>
    <property type="evidence" value="ECO:0007669"/>
    <property type="project" value="UniProtKB-KW"/>
</dbReference>
<dbReference type="GO" id="GO:0007200">
    <property type="term" value="P:phospholipase C-activating G protein-coupled receptor signaling pathway"/>
    <property type="evidence" value="ECO:0007669"/>
    <property type="project" value="InterPro"/>
</dbReference>
<dbReference type="FunFam" id="3.40.50.10330:FF:000016">
    <property type="entry name" value="Diacylglycerol kinase"/>
    <property type="match status" value="1"/>
</dbReference>
<dbReference type="FunFam" id="2.60.200.40:FF:000007">
    <property type="entry name" value="diacylglycerol kinase"/>
    <property type="match status" value="1"/>
</dbReference>
<dbReference type="Gene3D" id="2.60.200.40">
    <property type="match status" value="1"/>
</dbReference>
<dbReference type="Gene3D" id="3.40.50.10330">
    <property type="entry name" value="Probable inorganic polyphosphate/atp-NAD kinase, domain 1"/>
    <property type="match status" value="1"/>
</dbReference>
<dbReference type="InterPro" id="IPR017438">
    <property type="entry name" value="ATP-NAD_kinase_N"/>
</dbReference>
<dbReference type="InterPro" id="IPR037607">
    <property type="entry name" value="DGK"/>
</dbReference>
<dbReference type="InterPro" id="IPR000756">
    <property type="entry name" value="Diacylglycerol_kin_accessory"/>
</dbReference>
<dbReference type="InterPro" id="IPR001206">
    <property type="entry name" value="Diacylglycerol_kinase_cat_dom"/>
</dbReference>
<dbReference type="InterPro" id="IPR016961">
    <property type="entry name" value="Diacylglycerol_kinase_pln"/>
</dbReference>
<dbReference type="InterPro" id="IPR016064">
    <property type="entry name" value="NAD/diacylglycerol_kinase_sf"/>
</dbReference>
<dbReference type="PANTHER" id="PTHR11255">
    <property type="entry name" value="DIACYLGLYCEROL KINASE"/>
    <property type="match status" value="1"/>
</dbReference>
<dbReference type="PANTHER" id="PTHR11255:SF98">
    <property type="entry name" value="DIACYLGLYCEROL KINASE 5"/>
    <property type="match status" value="1"/>
</dbReference>
<dbReference type="Pfam" id="PF00609">
    <property type="entry name" value="DAGK_acc"/>
    <property type="match status" value="1"/>
</dbReference>
<dbReference type="Pfam" id="PF00781">
    <property type="entry name" value="DAGK_cat"/>
    <property type="match status" value="1"/>
</dbReference>
<dbReference type="PIRSF" id="PIRSF030829">
    <property type="entry name" value="Diacylglycerol_kinase_pln"/>
    <property type="match status" value="1"/>
</dbReference>
<dbReference type="SMART" id="SM00045">
    <property type="entry name" value="DAGKa"/>
    <property type="match status" value="1"/>
</dbReference>
<dbReference type="SMART" id="SM00046">
    <property type="entry name" value="DAGKc"/>
    <property type="match status" value="1"/>
</dbReference>
<dbReference type="SUPFAM" id="SSF111331">
    <property type="entry name" value="NAD kinase/diacylglycerol kinase-like"/>
    <property type="match status" value="1"/>
</dbReference>
<dbReference type="PROSITE" id="PS50146">
    <property type="entry name" value="DAGK"/>
    <property type="match status" value="1"/>
</dbReference>
<keyword id="KW-0025">Alternative splicing</keyword>
<keyword id="KW-0067">ATP-binding</keyword>
<keyword id="KW-0418">Kinase</keyword>
<keyword id="KW-0547">Nucleotide-binding</keyword>
<keyword id="KW-0611">Plant defense</keyword>
<keyword id="KW-1185">Reference proteome</keyword>
<keyword id="KW-0346">Stress response</keyword>
<keyword id="KW-0808">Transferase</keyword>
<reference key="1">
    <citation type="journal article" date="1999" name="Nature">
        <title>Sequence and analysis of chromosome 2 of the plant Arabidopsis thaliana.</title>
        <authorList>
            <person name="Lin X."/>
            <person name="Kaul S."/>
            <person name="Rounsley S.D."/>
            <person name="Shea T.P."/>
            <person name="Benito M.-I."/>
            <person name="Town C.D."/>
            <person name="Fujii C.Y."/>
            <person name="Mason T.M."/>
            <person name="Bowman C.L."/>
            <person name="Barnstead M.E."/>
            <person name="Feldblyum T.V."/>
            <person name="Buell C.R."/>
            <person name="Ketchum K.A."/>
            <person name="Lee J.J."/>
            <person name="Ronning C.M."/>
            <person name="Koo H.L."/>
            <person name="Moffat K.S."/>
            <person name="Cronin L.A."/>
            <person name="Shen M."/>
            <person name="Pai G."/>
            <person name="Van Aken S."/>
            <person name="Umayam L."/>
            <person name="Tallon L.J."/>
            <person name="Gill J.E."/>
            <person name="Adams M.D."/>
            <person name="Carrera A.J."/>
            <person name="Creasy T.H."/>
            <person name="Goodman H.M."/>
            <person name="Somerville C.R."/>
            <person name="Copenhaver G.P."/>
            <person name="Preuss D."/>
            <person name="Nierman W.C."/>
            <person name="White O."/>
            <person name="Eisen J.A."/>
            <person name="Salzberg S.L."/>
            <person name="Fraser C.M."/>
            <person name="Venter J.C."/>
        </authorList>
    </citation>
    <scope>NUCLEOTIDE SEQUENCE [LARGE SCALE GENOMIC DNA]</scope>
    <source>
        <strain>cv. Columbia</strain>
    </source>
</reference>
<reference key="2">
    <citation type="journal article" date="2017" name="Plant J.">
        <title>Araport11: a complete reannotation of the Arabidopsis thaliana reference genome.</title>
        <authorList>
            <person name="Cheng C.Y."/>
            <person name="Krishnakumar V."/>
            <person name="Chan A.P."/>
            <person name="Thibaud-Nissen F."/>
            <person name="Schobel S."/>
            <person name="Town C.D."/>
        </authorList>
    </citation>
    <scope>GENOME REANNOTATION</scope>
    <source>
        <strain>cv. Columbia</strain>
    </source>
</reference>
<reference key="3">
    <citation type="journal article" date="2003" name="Science">
        <title>Empirical analysis of transcriptional activity in the Arabidopsis genome.</title>
        <authorList>
            <person name="Yamada K."/>
            <person name="Lim J."/>
            <person name="Dale J.M."/>
            <person name="Chen H."/>
            <person name="Shinn P."/>
            <person name="Palm C.J."/>
            <person name="Southwick A.M."/>
            <person name="Wu H.C."/>
            <person name="Kim C.J."/>
            <person name="Nguyen M."/>
            <person name="Pham P.K."/>
            <person name="Cheuk R.F."/>
            <person name="Karlin-Newmann G."/>
            <person name="Liu S.X."/>
            <person name="Lam B."/>
            <person name="Sakano H."/>
            <person name="Wu T."/>
            <person name="Yu G."/>
            <person name="Miranda M."/>
            <person name="Quach H.L."/>
            <person name="Tripp M."/>
            <person name="Chang C.H."/>
            <person name="Lee J.M."/>
            <person name="Toriumi M.J."/>
            <person name="Chan M.M."/>
            <person name="Tang C.C."/>
            <person name="Onodera C.S."/>
            <person name="Deng J.M."/>
            <person name="Akiyama K."/>
            <person name="Ansari Y."/>
            <person name="Arakawa T."/>
            <person name="Banh J."/>
            <person name="Banno F."/>
            <person name="Bowser L."/>
            <person name="Brooks S.Y."/>
            <person name="Carninci P."/>
            <person name="Chao Q."/>
            <person name="Choy N."/>
            <person name="Enju A."/>
            <person name="Goldsmith A.D."/>
            <person name="Gurjal M."/>
            <person name="Hansen N.F."/>
            <person name="Hayashizaki Y."/>
            <person name="Johnson-Hopson C."/>
            <person name="Hsuan V.W."/>
            <person name="Iida K."/>
            <person name="Karnes M."/>
            <person name="Khan S."/>
            <person name="Koesema E."/>
            <person name="Ishida J."/>
            <person name="Jiang P.X."/>
            <person name="Jones T."/>
            <person name="Kawai J."/>
            <person name="Kamiya A."/>
            <person name="Meyers C."/>
            <person name="Nakajima M."/>
            <person name="Narusaka M."/>
            <person name="Seki M."/>
            <person name="Sakurai T."/>
            <person name="Satou M."/>
            <person name="Tamse R."/>
            <person name="Vaysberg M."/>
            <person name="Wallender E.K."/>
            <person name="Wong C."/>
            <person name="Yamamura Y."/>
            <person name="Yuan S."/>
            <person name="Shinozaki K."/>
            <person name="Davis R.W."/>
            <person name="Theologis A."/>
            <person name="Ecker J.R."/>
        </authorList>
    </citation>
    <scope>NUCLEOTIDE SEQUENCE [LARGE SCALE MRNA] (ISOFORM 1)</scope>
    <source>
        <strain>cv. Columbia</strain>
    </source>
</reference>
<reference key="4">
    <citation type="journal article" date="2009" name="DNA Res.">
        <title>Analysis of multiple occurrences of alternative splicing events in Arabidopsis thaliana using novel sequenced full-length cDNAs.</title>
        <authorList>
            <person name="Iida K."/>
            <person name="Fukami-Kobayashi K."/>
            <person name="Toyoda A."/>
            <person name="Sakaki Y."/>
            <person name="Kobayashi M."/>
            <person name="Seki M."/>
            <person name="Shinozaki K."/>
        </authorList>
    </citation>
    <scope>NUCLEOTIDE SEQUENCE [LARGE SCALE MRNA] (ISOFORM 2)</scope>
    <source>
        <strain>cv. Columbia</strain>
    </source>
</reference>
<reference key="5">
    <citation type="submission" date="2002-03" db="EMBL/GenBank/DDBJ databases">
        <title>Full-length cDNA from Arabidopsis thaliana.</title>
        <authorList>
            <person name="Brover V.V."/>
            <person name="Troukhan M.E."/>
            <person name="Alexandrov N.A."/>
            <person name="Lu Y.-P."/>
            <person name="Flavell R.B."/>
            <person name="Feldmann K.A."/>
        </authorList>
    </citation>
    <scope>NUCLEOTIDE SEQUENCE [LARGE SCALE MRNA] (ISOFORM 2)</scope>
</reference>
<organism>
    <name type="scientific">Arabidopsis thaliana</name>
    <name type="common">Mouse-ear cress</name>
    <dbReference type="NCBI Taxonomy" id="3702"/>
    <lineage>
        <taxon>Eukaryota</taxon>
        <taxon>Viridiplantae</taxon>
        <taxon>Streptophyta</taxon>
        <taxon>Embryophyta</taxon>
        <taxon>Tracheophyta</taxon>
        <taxon>Spermatophyta</taxon>
        <taxon>Magnoliopsida</taxon>
        <taxon>eudicotyledons</taxon>
        <taxon>Gunneridae</taxon>
        <taxon>Pentapetalae</taxon>
        <taxon>rosids</taxon>
        <taxon>malvids</taxon>
        <taxon>Brassicales</taxon>
        <taxon>Brassicaceae</taxon>
        <taxon>Camelineae</taxon>
        <taxon>Arabidopsis</taxon>
    </lineage>
</organism>
<accession>Q9C5E5</accession>
<accession>Q8LE70</accession>
<accession>Q9SKS9</accession>
<name>DGK5_ARATH</name>
<protein>
    <recommendedName>
        <fullName>Diacylglycerol kinase 5</fullName>
        <shortName>AtDGK5</shortName>
        <shortName>DAG kinase 5</shortName>
        <ecNumber>2.7.1.107</ecNumber>
    </recommendedName>
    <alternativeName>
        <fullName>Diglyceride kinase 5</fullName>
        <shortName>DGK 5</shortName>
    </alternativeName>
</protein>